<gene>
    <name evidence="1" type="primary">glmS</name>
    <name type="synonym">mamA</name>
    <name type="ordered locus">VNG_2286G</name>
</gene>
<comment type="function">
    <text evidence="1">Catalyzes the carbon skeleton rearrangement of L-glutamate to L-threo-3-methylaspartate ((2S,3S)-3-methylaspartate).</text>
</comment>
<comment type="catalytic activity">
    <reaction evidence="1">
        <text>(2S,3S)-3-methyl-L-aspartate = L-glutamate</text>
        <dbReference type="Rhea" id="RHEA:12857"/>
        <dbReference type="ChEBI" id="CHEBI:29985"/>
        <dbReference type="ChEBI" id="CHEBI:58724"/>
        <dbReference type="EC" id="5.4.99.1"/>
    </reaction>
</comment>
<comment type="cofactor">
    <cofactor evidence="1">
        <name>adenosylcob(III)alamin</name>
        <dbReference type="ChEBI" id="CHEBI:18408"/>
    </cofactor>
</comment>
<comment type="pathway">
    <text evidence="1">Amino-acid degradation; L-glutamate degradation via mesaconate pathway; acetate and pyruvate from L-glutamate: step 1/4.</text>
</comment>
<comment type="subunit">
    <text evidence="1">Heterotetramer composed of 2 epsilon subunits (GlmE) and 2 sigma subunits (GlmS). GlmE exists as a homodimer and GlmS as a monomer.</text>
</comment>
<comment type="similarity">
    <text evidence="1">Belongs to the methylaspartate mutase GlmS subunit family.</text>
</comment>
<keyword id="KW-0846">Cobalamin</keyword>
<keyword id="KW-0170">Cobalt</keyword>
<keyword id="KW-0413">Isomerase</keyword>
<keyword id="KW-0479">Metal-binding</keyword>
<keyword id="KW-1185">Reference proteome</keyword>
<reference key="1">
    <citation type="journal article" date="2000" name="Proc. Natl. Acad. Sci. U.S.A.">
        <title>Genome sequence of Halobacterium species NRC-1.</title>
        <authorList>
            <person name="Ng W.V."/>
            <person name="Kennedy S.P."/>
            <person name="Mahairas G.G."/>
            <person name="Berquist B."/>
            <person name="Pan M."/>
            <person name="Shukla H.D."/>
            <person name="Lasky S.R."/>
            <person name="Baliga N.S."/>
            <person name="Thorsson V."/>
            <person name="Sbrogna J."/>
            <person name="Swartzell S."/>
            <person name="Weir D."/>
            <person name="Hall J."/>
            <person name="Dahl T.A."/>
            <person name="Welti R."/>
            <person name="Goo Y.A."/>
            <person name="Leithauser B."/>
            <person name="Keller K."/>
            <person name="Cruz R."/>
            <person name="Danson M.J."/>
            <person name="Hough D.W."/>
            <person name="Maddocks D.G."/>
            <person name="Jablonski P.E."/>
            <person name="Krebs M.P."/>
            <person name="Angevine C.M."/>
            <person name="Dale H."/>
            <person name="Isenbarger T.A."/>
            <person name="Peck R.F."/>
            <person name="Pohlschroder M."/>
            <person name="Spudich J.L."/>
            <person name="Jung K.-H."/>
            <person name="Alam M."/>
            <person name="Freitas T."/>
            <person name="Hou S."/>
            <person name="Daniels C.J."/>
            <person name="Dennis P.P."/>
            <person name="Omer A.D."/>
            <person name="Ebhardt H."/>
            <person name="Lowe T.M."/>
            <person name="Liang P."/>
            <person name="Riley M."/>
            <person name="Hood L."/>
            <person name="DasSarma S."/>
        </authorList>
    </citation>
    <scope>NUCLEOTIDE SEQUENCE [LARGE SCALE GENOMIC DNA]</scope>
    <source>
        <strain>ATCC 700922 / JCM 11081 / NRC-1</strain>
    </source>
</reference>
<feature type="chain" id="PRO_0000216449" description="Glutamate mutase sigma subunit">
    <location>
        <begin position="1"/>
        <end position="149"/>
    </location>
</feature>
<feature type="domain" description="B12-binding" evidence="1">
    <location>
        <begin position="5"/>
        <end position="138"/>
    </location>
</feature>
<feature type="binding site" evidence="1">
    <location>
        <begin position="15"/>
        <end position="19"/>
    </location>
    <ligand>
        <name>adenosylcob(III)alamin</name>
        <dbReference type="ChEBI" id="CHEBI:18408"/>
    </ligand>
</feature>
<feature type="binding site" description="axial binding residue" evidence="1">
    <location>
        <position position="18"/>
    </location>
    <ligand>
        <name>adenosylcob(III)alamin</name>
        <dbReference type="ChEBI" id="CHEBI:18408"/>
    </ligand>
    <ligandPart>
        <name>Co</name>
        <dbReference type="ChEBI" id="CHEBI:27638"/>
    </ligandPart>
</feature>
<feature type="binding site" evidence="1">
    <location>
        <begin position="63"/>
        <end position="65"/>
    </location>
    <ligand>
        <name>adenosylcob(III)alamin</name>
        <dbReference type="ChEBI" id="CHEBI:18408"/>
    </ligand>
</feature>
<feature type="binding site" evidence="1">
    <location>
        <begin position="94"/>
        <end position="98"/>
    </location>
    <ligand>
        <name>adenosylcob(III)alamin</name>
        <dbReference type="ChEBI" id="CHEBI:18408"/>
    </ligand>
</feature>
<dbReference type="EC" id="5.4.99.1" evidence="1"/>
<dbReference type="EMBL" id="AE004437">
    <property type="protein sequence ID" value="AAG20400.1"/>
    <property type="molecule type" value="Genomic_DNA"/>
</dbReference>
<dbReference type="PIR" id="D84379">
    <property type="entry name" value="D84379"/>
</dbReference>
<dbReference type="RefSeq" id="WP_010903701.1">
    <property type="nucleotide sequence ID" value="NC_002607.1"/>
</dbReference>
<dbReference type="SMR" id="Q9HN21"/>
<dbReference type="STRING" id="64091.VNG_2286G"/>
<dbReference type="PaxDb" id="64091-VNG_2286G"/>
<dbReference type="GeneID" id="68694832"/>
<dbReference type="KEGG" id="hal:VNG_2286G"/>
<dbReference type="PATRIC" id="fig|64091.14.peg.1763"/>
<dbReference type="HOGENOM" id="CLU_136705_0_0_2"/>
<dbReference type="InParanoid" id="Q9HN21"/>
<dbReference type="OrthoDB" id="225699at2157"/>
<dbReference type="PhylomeDB" id="Q9HN21"/>
<dbReference type="UniPathway" id="UPA00561">
    <property type="reaction ID" value="UER00617"/>
</dbReference>
<dbReference type="Proteomes" id="UP000000554">
    <property type="component" value="Chromosome"/>
</dbReference>
<dbReference type="GO" id="GO:0031419">
    <property type="term" value="F:cobalamin binding"/>
    <property type="evidence" value="ECO:0007669"/>
    <property type="project" value="UniProtKB-KW"/>
</dbReference>
<dbReference type="GO" id="GO:0046872">
    <property type="term" value="F:metal ion binding"/>
    <property type="evidence" value="ECO:0007669"/>
    <property type="project" value="UniProtKB-KW"/>
</dbReference>
<dbReference type="GO" id="GO:0050097">
    <property type="term" value="F:methylaspartate mutase activity"/>
    <property type="evidence" value="ECO:0007669"/>
    <property type="project" value="UniProtKB-UniRule"/>
</dbReference>
<dbReference type="GO" id="GO:0019670">
    <property type="term" value="P:anaerobic glutamate catabolic process"/>
    <property type="evidence" value="ECO:0007669"/>
    <property type="project" value="InterPro"/>
</dbReference>
<dbReference type="GO" id="GO:0019553">
    <property type="term" value="P:glutamate catabolic process via L-citramalate"/>
    <property type="evidence" value="ECO:0007669"/>
    <property type="project" value="UniProtKB-UniRule"/>
</dbReference>
<dbReference type="CDD" id="cd02072">
    <property type="entry name" value="Glm_B12_BD"/>
    <property type="match status" value="1"/>
</dbReference>
<dbReference type="Gene3D" id="3.40.50.280">
    <property type="entry name" value="Cobalamin-binding domain"/>
    <property type="match status" value="1"/>
</dbReference>
<dbReference type="HAMAP" id="MF_00526">
    <property type="entry name" value="Me_Asp_mutase_S"/>
    <property type="match status" value="1"/>
</dbReference>
<dbReference type="InterPro" id="IPR006158">
    <property type="entry name" value="Cobalamin-bd"/>
</dbReference>
<dbReference type="InterPro" id="IPR036724">
    <property type="entry name" value="Cobalamin-bd_sf"/>
</dbReference>
<dbReference type="InterPro" id="IPR006394">
    <property type="entry name" value="GlmS"/>
</dbReference>
<dbReference type="NCBIfam" id="TIGR01501">
    <property type="entry name" value="MthylAspMutase"/>
    <property type="match status" value="1"/>
</dbReference>
<dbReference type="NCBIfam" id="NF002612">
    <property type="entry name" value="PRK02261.1"/>
    <property type="match status" value="1"/>
</dbReference>
<dbReference type="Pfam" id="PF02310">
    <property type="entry name" value="B12-binding"/>
    <property type="match status" value="1"/>
</dbReference>
<dbReference type="SUPFAM" id="SSF52242">
    <property type="entry name" value="Cobalamin (vitamin B12)-binding domain"/>
    <property type="match status" value="1"/>
</dbReference>
<dbReference type="PROSITE" id="PS51332">
    <property type="entry name" value="B12_BINDING"/>
    <property type="match status" value="1"/>
</dbReference>
<sequence>MSATDPTVVLGTIGSDAHAVGITLLDHALREAGFTVHNLGAQTAKTEFATAAADHDADAVLVSSLYGHAQQDCAGLHDQLAAAGVDATTVVGGNLAVGQTDFETVKQRFEEMGFDRVFSAQTGFEAVVDAVKTELDVDERSPTTTTLGA</sequence>
<proteinExistence type="inferred from homology"/>
<organism>
    <name type="scientific">Halobacterium salinarum (strain ATCC 700922 / JCM 11081 / NRC-1)</name>
    <name type="common">Halobacterium halobium</name>
    <dbReference type="NCBI Taxonomy" id="64091"/>
    <lineage>
        <taxon>Archaea</taxon>
        <taxon>Methanobacteriati</taxon>
        <taxon>Methanobacteriota</taxon>
        <taxon>Stenosarchaea group</taxon>
        <taxon>Halobacteria</taxon>
        <taxon>Halobacteriales</taxon>
        <taxon>Halobacteriaceae</taxon>
        <taxon>Halobacterium</taxon>
        <taxon>Halobacterium salinarum NRC-34001</taxon>
    </lineage>
</organism>
<accession>Q9HN21</accession>
<protein>
    <recommendedName>
        <fullName evidence="1">Glutamate mutase sigma subunit</fullName>
        <ecNumber evidence="1">5.4.99.1</ecNumber>
    </recommendedName>
    <alternativeName>
        <fullName evidence="1">Glutamate mutase S chain</fullName>
    </alternativeName>
    <alternativeName>
        <fullName evidence="1">Glutamate mutase small subunit</fullName>
    </alternativeName>
    <alternativeName>
        <fullName evidence="1">Methylaspartate mutase</fullName>
    </alternativeName>
</protein>
<name>GMSS_HALSA</name>
<evidence type="ECO:0000255" key="1">
    <source>
        <dbReference type="HAMAP-Rule" id="MF_00526"/>
    </source>
</evidence>